<feature type="chain" id="PRO_0000048184" description="Tubulin alpha-3 chain">
    <location>
        <begin position="1"/>
        <end position="451"/>
    </location>
</feature>
<feature type="active site" evidence="2">
    <location>
        <position position="254"/>
    </location>
</feature>
<feature type="binding site" evidence="2">
    <location>
        <position position="11"/>
    </location>
    <ligand>
        <name>GTP</name>
        <dbReference type="ChEBI" id="CHEBI:37565"/>
    </ligand>
</feature>
<feature type="binding site" evidence="2">
    <location>
        <position position="71"/>
    </location>
    <ligand>
        <name>GTP</name>
        <dbReference type="ChEBI" id="CHEBI:37565"/>
    </ligand>
</feature>
<feature type="binding site" evidence="2">
    <location>
        <position position="71"/>
    </location>
    <ligand>
        <name>Mg(2+)</name>
        <dbReference type="ChEBI" id="CHEBI:18420"/>
    </ligand>
</feature>
<feature type="binding site" evidence="2">
    <location>
        <position position="144"/>
    </location>
    <ligand>
        <name>GTP</name>
        <dbReference type="ChEBI" id="CHEBI:37565"/>
    </ligand>
</feature>
<feature type="binding site" evidence="2">
    <location>
        <position position="145"/>
    </location>
    <ligand>
        <name>GTP</name>
        <dbReference type="ChEBI" id="CHEBI:37565"/>
    </ligand>
</feature>
<feature type="binding site" evidence="2">
    <location>
        <position position="179"/>
    </location>
    <ligand>
        <name>GTP</name>
        <dbReference type="ChEBI" id="CHEBI:37565"/>
    </ligand>
</feature>
<feature type="binding site" evidence="2">
    <location>
        <position position="206"/>
    </location>
    <ligand>
        <name>GTP</name>
        <dbReference type="ChEBI" id="CHEBI:37565"/>
    </ligand>
</feature>
<feature type="binding site" evidence="2">
    <location>
        <position position="228"/>
    </location>
    <ligand>
        <name>GTP</name>
        <dbReference type="ChEBI" id="CHEBI:37565"/>
    </ligand>
</feature>
<feature type="site" description="Involved in polymerization" evidence="1">
    <location>
        <position position="451"/>
    </location>
</feature>
<feature type="modified residue" description="N6-acetyllysine" evidence="1">
    <location>
        <position position="40"/>
    </location>
</feature>
<gene>
    <name type="primary">TUBA3</name>
    <name type="synonym">ATUB3</name>
</gene>
<name>TBA3_HORVU</name>
<organism>
    <name type="scientific">Hordeum vulgare</name>
    <name type="common">Barley</name>
    <dbReference type="NCBI Taxonomy" id="4513"/>
    <lineage>
        <taxon>Eukaryota</taxon>
        <taxon>Viridiplantae</taxon>
        <taxon>Streptophyta</taxon>
        <taxon>Embryophyta</taxon>
        <taxon>Tracheophyta</taxon>
        <taxon>Spermatophyta</taxon>
        <taxon>Magnoliopsida</taxon>
        <taxon>Liliopsida</taxon>
        <taxon>Poales</taxon>
        <taxon>Poaceae</taxon>
        <taxon>BOP clade</taxon>
        <taxon>Pooideae</taxon>
        <taxon>Triticodae</taxon>
        <taxon>Triticeae</taxon>
        <taxon>Hordeinae</taxon>
        <taxon>Hordeum</taxon>
    </lineage>
</organism>
<sequence>MRECISIHIGQAGIQVGNACWELYCLEHGIQPDGQMPGDKTVGGGDDAFNTFFSETGAGKHVPRAVFVDLEPTVIDEVRTGTYRQLFHPEQLISGKEDAANNFARGHYTIGKEIVDLCLDRIRKLADNCTGLQGFLVFNAVGGGTGSGLGSLLLERLSVDYGKKSKLGFTVYPSPQVSTSVVEPYNSVLSTHSLLEHTDVAVLLDNEAIYDICRRSLDIERPTYTNLNRLVSQVISSLTASLRFDGALNVDVNEFQTNLVPYPRIHFMLSSYAPVISAEKAYHEQLSVAEITNSAFEPSSMMAKCDPRHGKYMACCLMYRGDVVPKDVNAAVATIKTKRTIQFVDWCPTGFKCGINYQPPSVVPGGDLAKVQRAVCMISNSTSVVEVFSRIDHKFDLMYAKRAFVHWYVGEGMEEGEFSEAREDLAALEKDYEEVGAEFDEGEDGDEGDEY</sequence>
<comment type="function">
    <text>Tubulin is the major constituent of microtubules, a cylinder consisting of laterally associated linear protofilaments composed of alpha- and beta-tubulin heterodimers. Microtubules grow by the addition of GTP-tubulin dimers to the microtubule end, where a stabilizing cap forms. Below the cap, tubulin dimers are in GDP-bound state, owing to GTPase activity of alpha-tubulin.</text>
</comment>
<comment type="catalytic activity">
    <reaction evidence="2">
        <text>GTP + H2O = GDP + phosphate + H(+)</text>
        <dbReference type="Rhea" id="RHEA:19669"/>
        <dbReference type="ChEBI" id="CHEBI:15377"/>
        <dbReference type="ChEBI" id="CHEBI:15378"/>
        <dbReference type="ChEBI" id="CHEBI:37565"/>
        <dbReference type="ChEBI" id="CHEBI:43474"/>
        <dbReference type="ChEBI" id="CHEBI:58189"/>
    </reaction>
    <physiologicalReaction direction="left-to-right" evidence="2">
        <dbReference type="Rhea" id="RHEA:19670"/>
    </physiologicalReaction>
</comment>
<comment type="cofactor">
    <cofactor evidence="2">
        <name>Mg(2+)</name>
        <dbReference type="ChEBI" id="CHEBI:18420"/>
    </cofactor>
</comment>
<comment type="subunit">
    <text>Dimer of alpha and beta chains. A typical microtubule is a hollow water-filled tube with an outer diameter of 25 nm and an inner diameter of 15 nM. Alpha-beta heterodimers associate head-to-tail to form protofilaments running lengthwise along the microtubule wall with the beta-tubulin subunit facing the microtubule plus end conferring a structural polarity. Microtubules usually have 13 protofilaments but different protofilament numbers can be found in some organisms and specialized cells.</text>
</comment>
<comment type="subcellular location">
    <subcellularLocation>
        <location>Cytoplasm</location>
        <location>Cytoskeleton</location>
    </subcellularLocation>
</comment>
<comment type="PTM">
    <text evidence="1">Undergoes a tyrosination/detyrosination cycle, the cyclic removal and re-addition of a C-terminal tyrosine residue by the enzymes tubulin tyrosine carboxypeptidase (TTCP) and tubulin tyrosine ligase (TTL), respectively.</text>
</comment>
<comment type="PTM">
    <text evidence="1">Acetylation of alpha chains at Lys-40 stabilizes microtubules and affects affinity and processivity of microtubule motors. This modification has a role in multiple cellular functions, ranging from cell motility, cell cycle progression or cell differentiation to intracellular trafficking and signaling (By similarity).</text>
</comment>
<comment type="similarity">
    <text evidence="3">Belongs to the tubulin family.</text>
</comment>
<proteinExistence type="evidence at transcript level"/>
<protein>
    <recommendedName>
        <fullName>Tubulin alpha-3 chain</fullName>
        <ecNumber evidence="2">3.6.5.-</ecNumber>
    </recommendedName>
</protein>
<accession>Q9ZRR5</accession>
<keyword id="KW-0007">Acetylation</keyword>
<keyword id="KW-0963">Cytoplasm</keyword>
<keyword id="KW-0206">Cytoskeleton</keyword>
<keyword id="KW-0342">GTP-binding</keyword>
<keyword id="KW-0378">Hydrolase</keyword>
<keyword id="KW-0460">Magnesium</keyword>
<keyword id="KW-0479">Metal-binding</keyword>
<keyword id="KW-0493">Microtubule</keyword>
<keyword id="KW-0547">Nucleotide-binding</keyword>
<evidence type="ECO:0000250" key="1"/>
<evidence type="ECO:0000250" key="2">
    <source>
        <dbReference type="UniProtKB" id="P68363"/>
    </source>
</evidence>
<evidence type="ECO:0000305" key="3"/>
<reference key="1">
    <citation type="journal article" date="2001" name="Plant Mol. Biol.">
        <title>Alpha-tubulin genes are differentially expressed during leaf cell development in barley (Hordeum vulgare L.).</title>
        <authorList>
            <person name="Schroeder J."/>
            <person name="Stenger H."/>
            <person name="Wernicke W."/>
        </authorList>
    </citation>
    <scope>NUCLEOTIDE SEQUENCE [MRNA]</scope>
    <source>
        <strain>cv. Igri</strain>
        <tissue>Leaf</tissue>
    </source>
</reference>
<dbReference type="EC" id="3.6.5.-" evidence="2"/>
<dbReference type="EMBL" id="AJ132399">
    <property type="protein sequence ID" value="CAA10663.1"/>
    <property type="molecule type" value="mRNA"/>
</dbReference>
<dbReference type="SMR" id="Q9ZRR5"/>
<dbReference type="OMA" id="RRVTDNC"/>
<dbReference type="ExpressionAtlas" id="Q9ZRR5">
    <property type="expression patterns" value="baseline and differential"/>
</dbReference>
<dbReference type="GO" id="GO:0005737">
    <property type="term" value="C:cytoplasm"/>
    <property type="evidence" value="ECO:0007669"/>
    <property type="project" value="UniProtKB-KW"/>
</dbReference>
<dbReference type="GO" id="GO:0005874">
    <property type="term" value="C:microtubule"/>
    <property type="evidence" value="ECO:0007669"/>
    <property type="project" value="UniProtKB-KW"/>
</dbReference>
<dbReference type="GO" id="GO:0005525">
    <property type="term" value="F:GTP binding"/>
    <property type="evidence" value="ECO:0007669"/>
    <property type="project" value="UniProtKB-KW"/>
</dbReference>
<dbReference type="GO" id="GO:0016787">
    <property type="term" value="F:hydrolase activity"/>
    <property type="evidence" value="ECO:0007669"/>
    <property type="project" value="UniProtKB-KW"/>
</dbReference>
<dbReference type="GO" id="GO:0046872">
    <property type="term" value="F:metal ion binding"/>
    <property type="evidence" value="ECO:0007669"/>
    <property type="project" value="UniProtKB-KW"/>
</dbReference>
<dbReference type="GO" id="GO:0005200">
    <property type="term" value="F:structural constituent of cytoskeleton"/>
    <property type="evidence" value="ECO:0007669"/>
    <property type="project" value="InterPro"/>
</dbReference>
<dbReference type="GO" id="GO:0007017">
    <property type="term" value="P:microtubule-based process"/>
    <property type="evidence" value="ECO:0007669"/>
    <property type="project" value="InterPro"/>
</dbReference>
<dbReference type="CDD" id="cd02186">
    <property type="entry name" value="alpha_tubulin"/>
    <property type="match status" value="1"/>
</dbReference>
<dbReference type="FunFam" id="1.10.287.600:FF:000001">
    <property type="entry name" value="Tubulin alpha chain"/>
    <property type="match status" value="1"/>
</dbReference>
<dbReference type="FunFam" id="3.30.1330.20:FF:000001">
    <property type="entry name" value="Tubulin alpha chain"/>
    <property type="match status" value="1"/>
</dbReference>
<dbReference type="FunFam" id="3.40.50.1440:FF:000004">
    <property type="entry name" value="Tubulin alpha chain"/>
    <property type="match status" value="1"/>
</dbReference>
<dbReference type="Gene3D" id="1.10.287.600">
    <property type="entry name" value="Helix hairpin bin"/>
    <property type="match status" value="1"/>
</dbReference>
<dbReference type="Gene3D" id="3.30.1330.20">
    <property type="entry name" value="Tubulin/FtsZ, C-terminal domain"/>
    <property type="match status" value="1"/>
</dbReference>
<dbReference type="Gene3D" id="3.40.50.1440">
    <property type="entry name" value="Tubulin/FtsZ, GTPase domain"/>
    <property type="match status" value="1"/>
</dbReference>
<dbReference type="InterPro" id="IPR002452">
    <property type="entry name" value="Alpha_tubulin"/>
</dbReference>
<dbReference type="InterPro" id="IPR008280">
    <property type="entry name" value="Tub_FtsZ_C"/>
</dbReference>
<dbReference type="InterPro" id="IPR000217">
    <property type="entry name" value="Tubulin"/>
</dbReference>
<dbReference type="InterPro" id="IPR037103">
    <property type="entry name" value="Tubulin/FtsZ-like_C"/>
</dbReference>
<dbReference type="InterPro" id="IPR018316">
    <property type="entry name" value="Tubulin/FtsZ_2-layer-sand-dom"/>
</dbReference>
<dbReference type="InterPro" id="IPR036525">
    <property type="entry name" value="Tubulin/FtsZ_GTPase_sf"/>
</dbReference>
<dbReference type="InterPro" id="IPR023123">
    <property type="entry name" value="Tubulin_C"/>
</dbReference>
<dbReference type="InterPro" id="IPR017975">
    <property type="entry name" value="Tubulin_CS"/>
</dbReference>
<dbReference type="InterPro" id="IPR003008">
    <property type="entry name" value="Tubulin_FtsZ_GTPase"/>
</dbReference>
<dbReference type="PANTHER" id="PTHR11588">
    <property type="entry name" value="TUBULIN"/>
    <property type="match status" value="1"/>
</dbReference>
<dbReference type="Pfam" id="PF00091">
    <property type="entry name" value="Tubulin"/>
    <property type="match status" value="1"/>
</dbReference>
<dbReference type="Pfam" id="PF03953">
    <property type="entry name" value="Tubulin_C"/>
    <property type="match status" value="1"/>
</dbReference>
<dbReference type="PRINTS" id="PR01162">
    <property type="entry name" value="ALPHATUBULIN"/>
</dbReference>
<dbReference type="PRINTS" id="PR01161">
    <property type="entry name" value="TUBULIN"/>
</dbReference>
<dbReference type="SMART" id="SM00864">
    <property type="entry name" value="Tubulin"/>
    <property type="match status" value="1"/>
</dbReference>
<dbReference type="SMART" id="SM00865">
    <property type="entry name" value="Tubulin_C"/>
    <property type="match status" value="1"/>
</dbReference>
<dbReference type="SUPFAM" id="SSF55307">
    <property type="entry name" value="Tubulin C-terminal domain-like"/>
    <property type="match status" value="1"/>
</dbReference>
<dbReference type="SUPFAM" id="SSF52490">
    <property type="entry name" value="Tubulin nucleotide-binding domain-like"/>
    <property type="match status" value="1"/>
</dbReference>
<dbReference type="PROSITE" id="PS00227">
    <property type="entry name" value="TUBULIN"/>
    <property type="match status" value="1"/>
</dbReference>